<sequence>MLIKLLTKVFGSRNDRTLRRMRKAVSLINAMEPEMEKLSDDELKAKTNEFRARIEKGESVESLIPEAFAVVREASKRVFGMRHFDVQLLGGMVLNDRCIAEMRTGEGKTLTATLPAYLNALSGKGVHVVTVNDYLAQRDAENNRPLFEFLGMSVGINLPGMPAPAKREAYAADITYGTNNEYGFDYLRDNMAFSPEERVQRKLHYALVDEVDSILIDEARTPLIISGPAEDSSEMYKKVNKIIPHLIRQEKEDSDTFQGEGHFSVDEKARQVNLTERGLVLIEELLVQEGIMDEGESLYSPGNIMLMHHVTAALRAHALFTRDVDYIVKDGEVIIVDEHTGRTMQGRRWSDGLHQAVEAKEGVEIQNENQTLASITFQNYFRLYEKLAGMTGTADTEAFEFSSIYKLDTVVVPTNRPMIRKDLPDLVYMTEAEKIQAIIEDIKERTANGQPVLVGTISIEKSEVVSRELTKAGIKHNVLNAKFHANEAGIVAQAGYPAAVTIATNMAGRGTDIMLGGSWQAEVAALEAPTEEQIAQIKADWQVRHDAVLAAGGLHIIGTERHESRRIDNQLRGRSGRQGDPGSSRFYLSMEDALMRIFASDRVSGMMRKLGMKPGEAIEHPWVTKAIANAQRKVESRNFDIRKQLLEYDDVANDQRRAIYTQRNELLDVSDVSDTINSIREDVFKETIDAYIPPQSLEEMWDIPGLQERLKNDFDLEMPIAEWLDKEPELHEETLRERILAQSIEVYQRKEEVVGAEMMRHFEKGVMLQTLDSLWKEHLAAMDYLRQGIHLRGYAQKDPKQEYKRESFAMFAAMLESLKYEVISTLSKVQVRMPEEVEAMEMQRREEAERLAQMQQLSHQDDDAAVAADLAAQTGERKIGRNDPCPCGSGKKYKQCHGRLS</sequence>
<reference key="1">
    <citation type="journal article" date="2008" name="Genome Res.">
        <title>Comparative genome analysis of Salmonella enteritidis PT4 and Salmonella gallinarum 287/91 provides insights into evolutionary and host adaptation pathways.</title>
        <authorList>
            <person name="Thomson N.R."/>
            <person name="Clayton D.J."/>
            <person name="Windhorst D."/>
            <person name="Vernikos G."/>
            <person name="Davidson S."/>
            <person name="Churcher C."/>
            <person name="Quail M.A."/>
            <person name="Stevens M."/>
            <person name="Jones M.A."/>
            <person name="Watson M."/>
            <person name="Barron A."/>
            <person name="Layton A."/>
            <person name="Pickard D."/>
            <person name="Kingsley R.A."/>
            <person name="Bignell A."/>
            <person name="Clark L."/>
            <person name="Harris B."/>
            <person name="Ormond D."/>
            <person name="Abdellah Z."/>
            <person name="Brooks K."/>
            <person name="Cherevach I."/>
            <person name="Chillingworth T."/>
            <person name="Woodward J."/>
            <person name="Norberczak H."/>
            <person name="Lord A."/>
            <person name="Arrowsmith C."/>
            <person name="Jagels K."/>
            <person name="Moule S."/>
            <person name="Mungall K."/>
            <person name="Saunders M."/>
            <person name="Whitehead S."/>
            <person name="Chabalgoity J.A."/>
            <person name="Maskell D."/>
            <person name="Humphreys T."/>
            <person name="Roberts M."/>
            <person name="Barrow P.A."/>
            <person name="Dougan G."/>
            <person name="Parkhill J."/>
        </authorList>
    </citation>
    <scope>NUCLEOTIDE SEQUENCE [LARGE SCALE GENOMIC DNA]</scope>
    <source>
        <strain>P125109</strain>
    </source>
</reference>
<protein>
    <recommendedName>
        <fullName evidence="1">Protein translocase subunit SecA</fullName>
        <ecNumber evidence="1">7.4.2.8</ecNumber>
    </recommendedName>
</protein>
<feature type="chain" id="PRO_1000145055" description="Protein translocase subunit SecA">
    <location>
        <begin position="1"/>
        <end position="901"/>
    </location>
</feature>
<feature type="binding site" evidence="1">
    <location>
        <position position="87"/>
    </location>
    <ligand>
        <name>ATP</name>
        <dbReference type="ChEBI" id="CHEBI:30616"/>
    </ligand>
</feature>
<feature type="binding site" evidence="1">
    <location>
        <begin position="105"/>
        <end position="109"/>
    </location>
    <ligand>
        <name>ATP</name>
        <dbReference type="ChEBI" id="CHEBI:30616"/>
    </ligand>
</feature>
<feature type="binding site" evidence="1">
    <location>
        <position position="512"/>
    </location>
    <ligand>
        <name>ATP</name>
        <dbReference type="ChEBI" id="CHEBI:30616"/>
    </ligand>
</feature>
<feature type="binding site" evidence="1">
    <location>
        <position position="885"/>
    </location>
    <ligand>
        <name>Zn(2+)</name>
        <dbReference type="ChEBI" id="CHEBI:29105"/>
    </ligand>
</feature>
<feature type="binding site" evidence="1">
    <location>
        <position position="887"/>
    </location>
    <ligand>
        <name>Zn(2+)</name>
        <dbReference type="ChEBI" id="CHEBI:29105"/>
    </ligand>
</feature>
<feature type="binding site" evidence="1">
    <location>
        <position position="896"/>
    </location>
    <ligand>
        <name>Zn(2+)</name>
        <dbReference type="ChEBI" id="CHEBI:29105"/>
    </ligand>
</feature>
<feature type="binding site" evidence="1">
    <location>
        <position position="897"/>
    </location>
    <ligand>
        <name>Zn(2+)</name>
        <dbReference type="ChEBI" id="CHEBI:29105"/>
    </ligand>
</feature>
<proteinExistence type="inferred from homology"/>
<keyword id="KW-0067">ATP-binding</keyword>
<keyword id="KW-0997">Cell inner membrane</keyword>
<keyword id="KW-1003">Cell membrane</keyword>
<keyword id="KW-0963">Cytoplasm</keyword>
<keyword id="KW-0472">Membrane</keyword>
<keyword id="KW-0479">Metal-binding</keyword>
<keyword id="KW-0547">Nucleotide-binding</keyword>
<keyword id="KW-0653">Protein transport</keyword>
<keyword id="KW-1278">Translocase</keyword>
<keyword id="KW-0811">Translocation</keyword>
<keyword id="KW-0813">Transport</keyword>
<keyword id="KW-0862">Zinc</keyword>
<dbReference type="EC" id="7.4.2.8" evidence="1"/>
<dbReference type="EMBL" id="AM933172">
    <property type="protein sequence ID" value="CAR31726.1"/>
    <property type="molecule type" value="Genomic_DNA"/>
</dbReference>
<dbReference type="RefSeq" id="WP_000905758.1">
    <property type="nucleotide sequence ID" value="NC_011294.1"/>
</dbReference>
<dbReference type="SMR" id="B5R2N2"/>
<dbReference type="KEGG" id="set:SEN0137"/>
<dbReference type="HOGENOM" id="CLU_005314_3_0_6"/>
<dbReference type="Proteomes" id="UP000000613">
    <property type="component" value="Chromosome"/>
</dbReference>
<dbReference type="GO" id="GO:0031522">
    <property type="term" value="C:cell envelope Sec protein transport complex"/>
    <property type="evidence" value="ECO:0007669"/>
    <property type="project" value="TreeGrafter"/>
</dbReference>
<dbReference type="GO" id="GO:0005829">
    <property type="term" value="C:cytosol"/>
    <property type="evidence" value="ECO:0007669"/>
    <property type="project" value="TreeGrafter"/>
</dbReference>
<dbReference type="GO" id="GO:0005886">
    <property type="term" value="C:plasma membrane"/>
    <property type="evidence" value="ECO:0007669"/>
    <property type="project" value="UniProtKB-SubCell"/>
</dbReference>
<dbReference type="GO" id="GO:0005524">
    <property type="term" value="F:ATP binding"/>
    <property type="evidence" value="ECO:0007669"/>
    <property type="project" value="UniProtKB-UniRule"/>
</dbReference>
<dbReference type="GO" id="GO:0046872">
    <property type="term" value="F:metal ion binding"/>
    <property type="evidence" value="ECO:0007669"/>
    <property type="project" value="UniProtKB-KW"/>
</dbReference>
<dbReference type="GO" id="GO:0008564">
    <property type="term" value="F:protein-exporting ATPase activity"/>
    <property type="evidence" value="ECO:0007669"/>
    <property type="project" value="UniProtKB-EC"/>
</dbReference>
<dbReference type="GO" id="GO:0065002">
    <property type="term" value="P:intracellular protein transmembrane transport"/>
    <property type="evidence" value="ECO:0007669"/>
    <property type="project" value="UniProtKB-UniRule"/>
</dbReference>
<dbReference type="GO" id="GO:0017038">
    <property type="term" value="P:protein import"/>
    <property type="evidence" value="ECO:0007669"/>
    <property type="project" value="InterPro"/>
</dbReference>
<dbReference type="GO" id="GO:0006605">
    <property type="term" value="P:protein targeting"/>
    <property type="evidence" value="ECO:0007669"/>
    <property type="project" value="UniProtKB-UniRule"/>
</dbReference>
<dbReference type="GO" id="GO:0043952">
    <property type="term" value="P:protein transport by the Sec complex"/>
    <property type="evidence" value="ECO:0007669"/>
    <property type="project" value="TreeGrafter"/>
</dbReference>
<dbReference type="CDD" id="cd17928">
    <property type="entry name" value="DEXDc_SecA"/>
    <property type="match status" value="1"/>
</dbReference>
<dbReference type="CDD" id="cd18803">
    <property type="entry name" value="SF2_C_secA"/>
    <property type="match status" value="1"/>
</dbReference>
<dbReference type="FunFam" id="1.10.3060.10:FF:000001">
    <property type="entry name" value="Preprotein translocase subunit SecA"/>
    <property type="match status" value="1"/>
</dbReference>
<dbReference type="FunFam" id="3.40.50.300:FF:000081">
    <property type="entry name" value="Preprotein translocase subunit SecA"/>
    <property type="match status" value="1"/>
</dbReference>
<dbReference type="FunFam" id="3.40.50.300:FF:000113">
    <property type="entry name" value="Preprotein translocase subunit SecA"/>
    <property type="match status" value="1"/>
</dbReference>
<dbReference type="FunFam" id="3.90.1440.10:FF:000001">
    <property type="entry name" value="Preprotein translocase subunit SecA"/>
    <property type="match status" value="1"/>
</dbReference>
<dbReference type="Gene3D" id="1.10.3060.10">
    <property type="entry name" value="Helical scaffold and wing domains of SecA"/>
    <property type="match status" value="1"/>
</dbReference>
<dbReference type="Gene3D" id="3.40.50.300">
    <property type="entry name" value="P-loop containing nucleotide triphosphate hydrolases"/>
    <property type="match status" value="2"/>
</dbReference>
<dbReference type="Gene3D" id="3.90.1440.10">
    <property type="entry name" value="SecA, preprotein cross-linking domain"/>
    <property type="match status" value="1"/>
</dbReference>
<dbReference type="HAMAP" id="MF_01382">
    <property type="entry name" value="SecA"/>
    <property type="match status" value="1"/>
</dbReference>
<dbReference type="InterPro" id="IPR014001">
    <property type="entry name" value="Helicase_ATP-bd"/>
</dbReference>
<dbReference type="InterPro" id="IPR027417">
    <property type="entry name" value="P-loop_NTPase"/>
</dbReference>
<dbReference type="InterPro" id="IPR004027">
    <property type="entry name" value="SEC_C_motif"/>
</dbReference>
<dbReference type="InterPro" id="IPR000185">
    <property type="entry name" value="SecA"/>
</dbReference>
<dbReference type="InterPro" id="IPR020937">
    <property type="entry name" value="SecA_CS"/>
</dbReference>
<dbReference type="InterPro" id="IPR011115">
    <property type="entry name" value="SecA_DEAD"/>
</dbReference>
<dbReference type="InterPro" id="IPR014018">
    <property type="entry name" value="SecA_motor_DEAD"/>
</dbReference>
<dbReference type="InterPro" id="IPR011130">
    <property type="entry name" value="SecA_preprotein_X-link_dom"/>
</dbReference>
<dbReference type="InterPro" id="IPR044722">
    <property type="entry name" value="SecA_SF2_C"/>
</dbReference>
<dbReference type="InterPro" id="IPR011116">
    <property type="entry name" value="SecA_Wing/Scaffold"/>
</dbReference>
<dbReference type="InterPro" id="IPR036266">
    <property type="entry name" value="SecA_Wing/Scaffold_sf"/>
</dbReference>
<dbReference type="InterPro" id="IPR036670">
    <property type="entry name" value="SecA_X-link_sf"/>
</dbReference>
<dbReference type="NCBIfam" id="NF009538">
    <property type="entry name" value="PRK12904.1"/>
    <property type="match status" value="1"/>
</dbReference>
<dbReference type="NCBIfam" id="TIGR00963">
    <property type="entry name" value="secA"/>
    <property type="match status" value="1"/>
</dbReference>
<dbReference type="PANTHER" id="PTHR30612:SF0">
    <property type="entry name" value="CHLOROPLAST PROTEIN-TRANSPORTING ATPASE"/>
    <property type="match status" value="1"/>
</dbReference>
<dbReference type="PANTHER" id="PTHR30612">
    <property type="entry name" value="SECA INNER MEMBRANE COMPONENT OF SEC PROTEIN SECRETION SYSTEM"/>
    <property type="match status" value="1"/>
</dbReference>
<dbReference type="Pfam" id="PF21090">
    <property type="entry name" value="P-loop_SecA"/>
    <property type="match status" value="1"/>
</dbReference>
<dbReference type="Pfam" id="PF02810">
    <property type="entry name" value="SEC-C"/>
    <property type="match status" value="1"/>
</dbReference>
<dbReference type="Pfam" id="PF07517">
    <property type="entry name" value="SecA_DEAD"/>
    <property type="match status" value="1"/>
</dbReference>
<dbReference type="Pfam" id="PF01043">
    <property type="entry name" value="SecA_PP_bind"/>
    <property type="match status" value="1"/>
</dbReference>
<dbReference type="Pfam" id="PF07516">
    <property type="entry name" value="SecA_SW"/>
    <property type="match status" value="1"/>
</dbReference>
<dbReference type="PRINTS" id="PR00906">
    <property type="entry name" value="SECA"/>
</dbReference>
<dbReference type="SMART" id="SM00957">
    <property type="entry name" value="SecA_DEAD"/>
    <property type="match status" value="1"/>
</dbReference>
<dbReference type="SMART" id="SM00958">
    <property type="entry name" value="SecA_PP_bind"/>
    <property type="match status" value="1"/>
</dbReference>
<dbReference type="SUPFAM" id="SSF81886">
    <property type="entry name" value="Helical scaffold and wing domains of SecA"/>
    <property type="match status" value="1"/>
</dbReference>
<dbReference type="SUPFAM" id="SSF52540">
    <property type="entry name" value="P-loop containing nucleoside triphosphate hydrolases"/>
    <property type="match status" value="2"/>
</dbReference>
<dbReference type="SUPFAM" id="SSF81767">
    <property type="entry name" value="Pre-protein crosslinking domain of SecA"/>
    <property type="match status" value="1"/>
</dbReference>
<dbReference type="PROSITE" id="PS01312">
    <property type="entry name" value="SECA"/>
    <property type="match status" value="1"/>
</dbReference>
<dbReference type="PROSITE" id="PS51196">
    <property type="entry name" value="SECA_MOTOR_DEAD"/>
    <property type="match status" value="1"/>
</dbReference>
<evidence type="ECO:0000255" key="1">
    <source>
        <dbReference type="HAMAP-Rule" id="MF_01382"/>
    </source>
</evidence>
<name>SECA_SALEP</name>
<organism>
    <name type="scientific">Salmonella enteritidis PT4 (strain P125109)</name>
    <dbReference type="NCBI Taxonomy" id="550537"/>
    <lineage>
        <taxon>Bacteria</taxon>
        <taxon>Pseudomonadati</taxon>
        <taxon>Pseudomonadota</taxon>
        <taxon>Gammaproteobacteria</taxon>
        <taxon>Enterobacterales</taxon>
        <taxon>Enterobacteriaceae</taxon>
        <taxon>Salmonella</taxon>
    </lineage>
</organism>
<comment type="function">
    <text evidence="1">Part of the Sec protein translocase complex. Interacts with the SecYEG preprotein conducting channel. Has a central role in coupling the hydrolysis of ATP to the transfer of proteins into and across the cell membrane, serving both as a receptor for the preprotein-SecB complex and as an ATP-driven molecular motor driving the stepwise translocation of polypeptide chains across the membrane.</text>
</comment>
<comment type="catalytic activity">
    <reaction evidence="1">
        <text>ATP + H2O + cellular proteinSide 1 = ADP + phosphate + cellular proteinSide 2.</text>
        <dbReference type="EC" id="7.4.2.8"/>
    </reaction>
</comment>
<comment type="cofactor">
    <cofactor evidence="1">
        <name>Zn(2+)</name>
        <dbReference type="ChEBI" id="CHEBI:29105"/>
    </cofactor>
    <text evidence="1">May bind 1 zinc ion per subunit.</text>
</comment>
<comment type="subunit">
    <text evidence="1">Monomer and homodimer. Part of the essential Sec protein translocation apparatus which comprises SecA, SecYEG and auxiliary proteins SecDF-YajC and YidC.</text>
</comment>
<comment type="subcellular location">
    <subcellularLocation>
        <location evidence="1">Cell inner membrane</location>
        <topology evidence="1">Peripheral membrane protein</topology>
        <orientation evidence="1">Cytoplasmic side</orientation>
    </subcellularLocation>
    <subcellularLocation>
        <location evidence="1">Cytoplasm</location>
    </subcellularLocation>
    <text evidence="1">Distribution is 50-50.</text>
</comment>
<comment type="induction">
    <text evidence="1">Repressed under conditions of excess protein secretion capacity and derepressed when protein secretion becomes limiting. This is regulated by SecM.</text>
</comment>
<comment type="similarity">
    <text evidence="1">Belongs to the SecA family.</text>
</comment>
<gene>
    <name evidence="1" type="primary">secA</name>
    <name type="ordered locus">SEN0137</name>
</gene>
<accession>B5R2N2</accession>